<sequence length="26" mass="2875">RELLMGIFEKNGTGKTAAFVIPLLQK</sequence>
<organism>
    <name type="scientific">Catharanthus roseus</name>
    <name type="common">Madagascar periwinkle</name>
    <name type="synonym">Vinca rosea</name>
    <dbReference type="NCBI Taxonomy" id="4058"/>
    <lineage>
        <taxon>Eukaryota</taxon>
        <taxon>Viridiplantae</taxon>
        <taxon>Streptophyta</taxon>
        <taxon>Embryophyta</taxon>
        <taxon>Tracheophyta</taxon>
        <taxon>Spermatophyta</taxon>
        <taxon>Magnoliopsida</taxon>
        <taxon>eudicotyledons</taxon>
        <taxon>Gunneridae</taxon>
        <taxon>Pentapetalae</taxon>
        <taxon>asterids</taxon>
        <taxon>lamiids</taxon>
        <taxon>Gentianales</taxon>
        <taxon>Apocynaceae</taxon>
        <taxon>Rauvolfioideae</taxon>
        <taxon>Vinceae</taxon>
        <taxon>Catharanthinae</taxon>
        <taxon>Catharanthus</taxon>
    </lineage>
</organism>
<comment type="function">
    <text evidence="3">ATP-dependent RNA helicase involved in mRNA turnover, and more specifically in mRNA decapping.</text>
</comment>
<comment type="catalytic activity">
    <reaction>
        <text>ATP + H2O = ADP + phosphate + H(+)</text>
        <dbReference type="Rhea" id="RHEA:13065"/>
        <dbReference type="ChEBI" id="CHEBI:15377"/>
        <dbReference type="ChEBI" id="CHEBI:15378"/>
        <dbReference type="ChEBI" id="CHEBI:30616"/>
        <dbReference type="ChEBI" id="CHEBI:43474"/>
        <dbReference type="ChEBI" id="CHEBI:456216"/>
        <dbReference type="EC" id="3.6.4.13"/>
    </reaction>
</comment>
<comment type="subcellular location">
    <subcellularLocation>
        <location evidence="1">Cytoplasm</location>
        <location evidence="1">P-body</location>
    </subcellularLocation>
    <text evidence="1">Is concentrated in several cytoplasmic foci called P bodies (or cytoplasmic processing bodies) which represent sites of mRNA decapping and 5' to 3' exonucleotidic decay.</text>
</comment>
<comment type="domain">
    <text evidence="6">The Q motif is unique to and characteristic of the DEAD box family of RNA helicases and controls ATP binding and hydrolysis.</text>
</comment>
<comment type="similarity">
    <text evidence="4">Belongs to the DEAD box helicase family. DDX6/DHH1 subfamily.</text>
</comment>
<reference evidence="6" key="1">
    <citation type="submission" date="2008-01" db="UniProtKB">
        <authorList>
            <person name="Varman P.A.M."/>
            <person name="Ranjitha Kumari B.D."/>
        </authorList>
    </citation>
    <scope>PROTEIN SEQUENCE</scope>
</reference>
<keyword id="KW-0067">ATP-binding</keyword>
<keyword id="KW-0963">Cytoplasm</keyword>
<keyword id="KW-0903">Direct protein sequencing</keyword>
<keyword id="KW-0347">Helicase</keyword>
<keyword id="KW-0378">Hydrolase</keyword>
<keyword id="KW-0507">mRNA processing</keyword>
<keyword id="KW-0509">mRNA transport</keyword>
<keyword id="KW-0547">Nucleotide-binding</keyword>
<keyword id="KW-0694">RNA-binding</keyword>
<keyword id="KW-0810">Translation regulation</keyword>
<keyword id="KW-0813">Transport</keyword>
<evidence type="ECO:0000250" key="1">
    <source>
        <dbReference type="UniProtKB" id="P39517"/>
    </source>
</evidence>
<evidence type="ECO:0000250" key="2">
    <source>
        <dbReference type="UniProtKB" id="Q58Z64"/>
    </source>
</evidence>
<evidence type="ECO:0000250" key="3">
    <source>
        <dbReference type="UniProtKB" id="Q8RXK6"/>
    </source>
</evidence>
<evidence type="ECO:0000255" key="4"/>
<evidence type="ECO:0000255" key="5">
    <source>
        <dbReference type="PROSITE-ProRule" id="PRU00541"/>
    </source>
</evidence>
<evidence type="ECO:0000305" key="6"/>
<feature type="chain" id="PRO_0000324679" description="DEAD-box ATP-dependent RNA helicase 1">
    <location>
        <begin position="1" status="less than"/>
        <end position="26" status="greater than"/>
    </location>
</feature>
<feature type="domain" description="Helicase ATP-binding" evidence="5">
    <location>
        <begin position="11" status="less than"/>
        <end position="26" status="greater than"/>
    </location>
</feature>
<feature type="short sequence motif" description="Q motif" evidence="4">
    <location>
        <begin position="1" status="less than"/>
        <end position="10" status="greater than"/>
    </location>
</feature>
<feature type="binding site" evidence="2 5">
    <location>
        <begin position="11" status="less than"/>
        <end position="16"/>
    </location>
    <ligand>
        <name>ATP</name>
        <dbReference type="ChEBI" id="CHEBI:30616"/>
    </ligand>
</feature>
<feature type="non-consecutive residues" evidence="6">
    <location>
        <begin position="10"/>
        <end position="11"/>
    </location>
</feature>
<feature type="non-terminal residue">
    <location>
        <position position="1"/>
    </location>
</feature>
<feature type="non-terminal residue">
    <location>
        <position position="26"/>
    </location>
</feature>
<protein>
    <recommendedName>
        <fullName>DEAD-box ATP-dependent RNA helicase 1</fullName>
        <ecNumber>3.6.4.13</ecNumber>
    </recommendedName>
</protein>
<dbReference type="EC" id="3.6.4.13"/>
<dbReference type="GO" id="GO:0000932">
    <property type="term" value="C:P-body"/>
    <property type="evidence" value="ECO:0007669"/>
    <property type="project" value="UniProtKB-SubCell"/>
</dbReference>
<dbReference type="GO" id="GO:0005524">
    <property type="term" value="F:ATP binding"/>
    <property type="evidence" value="ECO:0007669"/>
    <property type="project" value="UniProtKB-KW"/>
</dbReference>
<dbReference type="GO" id="GO:0016887">
    <property type="term" value="F:ATP hydrolysis activity"/>
    <property type="evidence" value="ECO:0007669"/>
    <property type="project" value="RHEA"/>
</dbReference>
<dbReference type="GO" id="GO:0003723">
    <property type="term" value="F:RNA binding"/>
    <property type="evidence" value="ECO:0007669"/>
    <property type="project" value="UniProtKB-KW"/>
</dbReference>
<dbReference type="GO" id="GO:0003724">
    <property type="term" value="F:RNA helicase activity"/>
    <property type="evidence" value="ECO:0007669"/>
    <property type="project" value="UniProtKB-EC"/>
</dbReference>
<dbReference type="GO" id="GO:0006397">
    <property type="term" value="P:mRNA processing"/>
    <property type="evidence" value="ECO:0007669"/>
    <property type="project" value="UniProtKB-KW"/>
</dbReference>
<dbReference type="GO" id="GO:0051028">
    <property type="term" value="P:mRNA transport"/>
    <property type="evidence" value="ECO:0007669"/>
    <property type="project" value="UniProtKB-KW"/>
</dbReference>
<dbReference type="GO" id="GO:0006417">
    <property type="term" value="P:regulation of translation"/>
    <property type="evidence" value="ECO:0007669"/>
    <property type="project" value="UniProtKB-KW"/>
</dbReference>
<proteinExistence type="evidence at protein level"/>
<name>RH1_CATRO</name>
<accession>P85441</accession>